<proteinExistence type="inferred from homology"/>
<comment type="similarity">
    <text evidence="1">Belongs to the UPF0340 family.</text>
</comment>
<organism>
    <name type="scientific">Geobacillus kaustophilus (strain HTA426)</name>
    <dbReference type="NCBI Taxonomy" id="235909"/>
    <lineage>
        <taxon>Bacteria</taxon>
        <taxon>Bacillati</taxon>
        <taxon>Bacillota</taxon>
        <taxon>Bacilli</taxon>
        <taxon>Bacillales</taxon>
        <taxon>Anoxybacillaceae</taxon>
        <taxon>Geobacillus</taxon>
        <taxon>Geobacillus thermoleovorans group</taxon>
    </lineage>
</organism>
<reference key="1">
    <citation type="journal article" date="2004" name="Nucleic Acids Res.">
        <title>Thermoadaptation trait revealed by the genome sequence of thermophilic Geobacillus kaustophilus.</title>
        <authorList>
            <person name="Takami H."/>
            <person name="Takaki Y."/>
            <person name="Chee G.-J."/>
            <person name="Nishi S."/>
            <person name="Shimamura S."/>
            <person name="Suzuki H."/>
            <person name="Matsui S."/>
            <person name="Uchiyama I."/>
        </authorList>
    </citation>
    <scope>NUCLEOTIDE SEQUENCE [LARGE SCALE GENOMIC DNA]</scope>
    <source>
        <strain>HTA426</strain>
    </source>
</reference>
<sequence length="188" mass="20262">MTEWRQQWQAILHEFRKQAPLGRGDVVVIGCSTSEVLGERIGTAGSMDVAAMLFAELDAWRRETGIALAFQCCEHLNRALVVERETAKTHGLEIVSVVPVPKAGGAMAAYAYRKFADPVVVEAIRADAGIDIGHTLIGMHLKPVAVPVRVSVKHIGSACVTLAKTRPKLIGGARAVYSLENPNDSCSF</sequence>
<gene>
    <name type="ordered locus">GK3370</name>
</gene>
<dbReference type="EMBL" id="BA000043">
    <property type="protein sequence ID" value="BAD77655.1"/>
    <property type="molecule type" value="Genomic_DNA"/>
</dbReference>
<dbReference type="SMR" id="Q5KUI1"/>
<dbReference type="STRING" id="235909.GK3370"/>
<dbReference type="KEGG" id="gka:GK3370"/>
<dbReference type="eggNOG" id="COG4475">
    <property type="taxonomic scope" value="Bacteria"/>
</dbReference>
<dbReference type="HOGENOM" id="CLU_106658_0_0_9"/>
<dbReference type="Proteomes" id="UP000001172">
    <property type="component" value="Chromosome"/>
</dbReference>
<dbReference type="Gene3D" id="3.40.50.10360">
    <property type="entry name" value="Hypothetical protein TT1679"/>
    <property type="match status" value="1"/>
</dbReference>
<dbReference type="HAMAP" id="MF_00800">
    <property type="entry name" value="UPF0340"/>
    <property type="match status" value="1"/>
</dbReference>
<dbReference type="InterPro" id="IPR028345">
    <property type="entry name" value="Antibiotic_NAT-like"/>
</dbReference>
<dbReference type="InterPro" id="IPR006340">
    <property type="entry name" value="DUF436"/>
</dbReference>
<dbReference type="NCBIfam" id="TIGR01440">
    <property type="entry name" value="TIGR01440 family protein"/>
    <property type="match status" value="1"/>
</dbReference>
<dbReference type="Pfam" id="PF04260">
    <property type="entry name" value="DUF436"/>
    <property type="match status" value="1"/>
</dbReference>
<dbReference type="PIRSF" id="PIRSF007510">
    <property type="entry name" value="UCP007510"/>
    <property type="match status" value="1"/>
</dbReference>
<dbReference type="SUPFAM" id="SSF110710">
    <property type="entry name" value="TTHA0583/YokD-like"/>
    <property type="match status" value="1"/>
</dbReference>
<feature type="chain" id="PRO_0000213007" description="UPF0340 protein GK3370">
    <location>
        <begin position="1"/>
        <end position="188"/>
    </location>
</feature>
<accession>Q5KUI1</accession>
<keyword id="KW-1185">Reference proteome</keyword>
<name>Y3370_GEOKA</name>
<protein>
    <recommendedName>
        <fullName evidence="1">UPF0340 protein GK3370</fullName>
    </recommendedName>
</protein>
<evidence type="ECO:0000255" key="1">
    <source>
        <dbReference type="HAMAP-Rule" id="MF_00800"/>
    </source>
</evidence>